<dbReference type="EMBL" id="AL606455">
    <property type="protein sequence ID" value="CAD41853.2"/>
    <property type="molecule type" value="Genomic_DNA"/>
</dbReference>
<dbReference type="EMBL" id="AL731607">
    <property type="protein sequence ID" value="CAE05966.1"/>
    <property type="molecule type" value="Genomic_DNA"/>
</dbReference>
<dbReference type="EMBL" id="AP008210">
    <property type="status" value="NOT_ANNOTATED_CDS"/>
    <property type="molecule type" value="Genomic_DNA"/>
</dbReference>
<dbReference type="EMBL" id="AP014960">
    <property type="protein sequence ID" value="BAS91271.1"/>
    <property type="molecule type" value="Genomic_DNA"/>
</dbReference>
<dbReference type="EMBL" id="CM000141">
    <property type="protein sequence ID" value="EAZ32165.1"/>
    <property type="molecule type" value="Genomic_DNA"/>
</dbReference>
<dbReference type="SMR" id="Q7X742"/>
<dbReference type="FunCoup" id="Q7X742">
    <property type="interactions" value="862"/>
</dbReference>
<dbReference type="STRING" id="39947.Q7X742"/>
<dbReference type="PaxDb" id="39947-Q7X742"/>
<dbReference type="EnsemblPlants" id="Os04t0641700-01">
    <property type="protein sequence ID" value="Os04t0641700-01"/>
    <property type="gene ID" value="Os04g0641700"/>
</dbReference>
<dbReference type="GeneID" id="107278038"/>
<dbReference type="Gramene" id="Os04t0641700-01">
    <property type="protein sequence ID" value="Os04t0641700-01"/>
    <property type="gene ID" value="Os04g0641700"/>
</dbReference>
<dbReference type="KEGG" id="osa:107278038"/>
<dbReference type="eggNOG" id="ENOG502R3DI">
    <property type="taxonomic scope" value="Eukaryota"/>
</dbReference>
<dbReference type="HOGENOM" id="CLU_183267_0_0_1"/>
<dbReference type="InParanoid" id="Q7X742"/>
<dbReference type="OrthoDB" id="988630at2759"/>
<dbReference type="PlantReactome" id="R-OSA-5632095">
    <property type="pathway name" value="Brassinosteroid signaling"/>
</dbReference>
<dbReference type="Proteomes" id="UP000000763">
    <property type="component" value="Chromosome 4"/>
</dbReference>
<dbReference type="Proteomes" id="UP000007752">
    <property type="component" value="Chromosome 4"/>
</dbReference>
<dbReference type="Proteomes" id="UP000059680">
    <property type="component" value="Chromosome 4"/>
</dbReference>
<dbReference type="GO" id="GO:0046983">
    <property type="term" value="F:protein dimerization activity"/>
    <property type="evidence" value="ECO:0007669"/>
    <property type="project" value="InterPro"/>
</dbReference>
<dbReference type="GO" id="GO:0006355">
    <property type="term" value="P:regulation of DNA-templated transcription"/>
    <property type="evidence" value="ECO:0007669"/>
    <property type="project" value="InterPro"/>
</dbReference>
<dbReference type="GO" id="GO:0040008">
    <property type="term" value="P:regulation of growth"/>
    <property type="evidence" value="ECO:0007669"/>
    <property type="project" value="InterPro"/>
</dbReference>
<dbReference type="GO" id="GO:0009741">
    <property type="term" value="P:response to brassinosteroid"/>
    <property type="evidence" value="ECO:0000270"/>
    <property type="project" value="UniProtKB"/>
</dbReference>
<dbReference type="GO" id="GO:0009826">
    <property type="term" value="P:unidimensional cell growth"/>
    <property type="evidence" value="ECO:0000315"/>
    <property type="project" value="UniProtKB"/>
</dbReference>
<dbReference type="FunFam" id="4.10.280.10:FF:000113">
    <property type="entry name" value="Transcription factor ILI1"/>
    <property type="match status" value="1"/>
</dbReference>
<dbReference type="Gene3D" id="4.10.280.10">
    <property type="entry name" value="Helix-loop-helix DNA-binding domain"/>
    <property type="match status" value="1"/>
</dbReference>
<dbReference type="InterPro" id="IPR011598">
    <property type="entry name" value="bHLH_dom"/>
</dbReference>
<dbReference type="InterPro" id="IPR036638">
    <property type="entry name" value="HLH_DNA-bd_sf"/>
</dbReference>
<dbReference type="InterPro" id="IPR044293">
    <property type="entry name" value="PRE"/>
</dbReference>
<dbReference type="PANTHER" id="PTHR46446:SF25">
    <property type="entry name" value="TRANSCRIPTION FACTOR ILI1"/>
    <property type="match status" value="1"/>
</dbReference>
<dbReference type="PANTHER" id="PTHR46446">
    <property type="entry name" value="TRANSCRIPTION FACTOR PRE"/>
    <property type="match status" value="1"/>
</dbReference>
<dbReference type="Pfam" id="PF23174">
    <property type="entry name" value="bHLH_ILI"/>
    <property type="match status" value="1"/>
</dbReference>
<dbReference type="SUPFAM" id="SSF47459">
    <property type="entry name" value="HLH, helix-loop-helix DNA-binding domain"/>
    <property type="match status" value="1"/>
</dbReference>
<dbReference type="PROSITE" id="PS50888">
    <property type="entry name" value="BHLH"/>
    <property type="match status" value="1"/>
</dbReference>
<sequence length="104" mass="11185">MSSSRRSRSRRAGSSVPSSSSSSRTSISEDQIAELLSKLQALLPESQARNGAHRGSAARVLQETCSYIRSLHQEVDNLSETLAQLLASPDVTSDQAAVIRSLLM</sequence>
<gene>
    <name evidence="4" type="primary">BHLH154</name>
    <name type="synonym">ILI1</name>
    <name evidence="5" type="ordered locus">Os04g0641700</name>
    <name type="ordered locus">LOC_Os04g54900</name>
    <name evidence="7" type="ORF">OsJ_16370</name>
    <name type="ORF">OSJNBa0063C18.7</name>
    <name type="ORF">OSJNBb0079B02.12</name>
</gene>
<evidence type="ECO:0000255" key="1">
    <source>
        <dbReference type="PROSITE-ProRule" id="PRU00981"/>
    </source>
</evidence>
<evidence type="ECO:0000256" key="2">
    <source>
        <dbReference type="SAM" id="MobiDB-lite"/>
    </source>
</evidence>
<evidence type="ECO:0000269" key="3">
    <source>
    </source>
</evidence>
<evidence type="ECO:0000303" key="4">
    <source>
    </source>
</evidence>
<evidence type="ECO:0000305" key="5"/>
<evidence type="ECO:0000305" key="6">
    <source>
    </source>
</evidence>
<evidence type="ECO:0000312" key="7">
    <source>
        <dbReference type="EMBL" id="EAZ32165.1"/>
    </source>
</evidence>
<organism>
    <name type="scientific">Oryza sativa subsp. japonica</name>
    <name type="common">Rice</name>
    <dbReference type="NCBI Taxonomy" id="39947"/>
    <lineage>
        <taxon>Eukaryota</taxon>
        <taxon>Viridiplantae</taxon>
        <taxon>Streptophyta</taxon>
        <taxon>Embryophyta</taxon>
        <taxon>Tracheophyta</taxon>
        <taxon>Spermatophyta</taxon>
        <taxon>Magnoliopsida</taxon>
        <taxon>Liliopsida</taxon>
        <taxon>Poales</taxon>
        <taxon>Poaceae</taxon>
        <taxon>BOP clade</taxon>
        <taxon>Oryzoideae</taxon>
        <taxon>Oryzeae</taxon>
        <taxon>Oryzinae</taxon>
        <taxon>Oryza</taxon>
        <taxon>Oryza sativa</taxon>
    </lineage>
</organism>
<keyword id="KW-0341">Growth regulation</keyword>
<keyword id="KW-1185">Reference proteome</keyword>
<keyword id="KW-0804">Transcription</keyword>
<keyword id="KW-0805">Transcription regulation</keyword>
<reference key="1">
    <citation type="journal article" date="2002" name="Nature">
        <title>Sequence and analysis of rice chromosome 4.</title>
        <authorList>
            <person name="Feng Q."/>
            <person name="Zhang Y."/>
            <person name="Hao P."/>
            <person name="Wang S."/>
            <person name="Fu G."/>
            <person name="Huang Y."/>
            <person name="Li Y."/>
            <person name="Zhu J."/>
            <person name="Liu Y."/>
            <person name="Hu X."/>
            <person name="Jia P."/>
            <person name="Zhang Y."/>
            <person name="Zhao Q."/>
            <person name="Ying K."/>
            <person name="Yu S."/>
            <person name="Tang Y."/>
            <person name="Weng Q."/>
            <person name="Zhang L."/>
            <person name="Lu Y."/>
            <person name="Mu J."/>
            <person name="Lu Y."/>
            <person name="Zhang L.S."/>
            <person name="Yu Z."/>
            <person name="Fan D."/>
            <person name="Liu X."/>
            <person name="Lu T."/>
            <person name="Li C."/>
            <person name="Wu Y."/>
            <person name="Sun T."/>
            <person name="Lei H."/>
            <person name="Li T."/>
            <person name="Hu H."/>
            <person name="Guan J."/>
            <person name="Wu M."/>
            <person name="Zhang R."/>
            <person name="Zhou B."/>
            <person name="Chen Z."/>
            <person name="Chen L."/>
            <person name="Jin Z."/>
            <person name="Wang R."/>
            <person name="Yin H."/>
            <person name="Cai Z."/>
            <person name="Ren S."/>
            <person name="Lv G."/>
            <person name="Gu W."/>
            <person name="Zhu G."/>
            <person name="Tu Y."/>
            <person name="Jia J."/>
            <person name="Zhang Y."/>
            <person name="Chen J."/>
            <person name="Kang H."/>
            <person name="Chen X."/>
            <person name="Shao C."/>
            <person name="Sun Y."/>
            <person name="Hu Q."/>
            <person name="Zhang X."/>
            <person name="Zhang W."/>
            <person name="Wang L."/>
            <person name="Ding C."/>
            <person name="Sheng H."/>
            <person name="Gu J."/>
            <person name="Chen S."/>
            <person name="Ni L."/>
            <person name="Zhu F."/>
            <person name="Chen W."/>
            <person name="Lan L."/>
            <person name="Lai Y."/>
            <person name="Cheng Z."/>
            <person name="Gu M."/>
            <person name="Jiang J."/>
            <person name="Li J."/>
            <person name="Hong G."/>
            <person name="Xue Y."/>
            <person name="Han B."/>
        </authorList>
    </citation>
    <scope>NUCLEOTIDE SEQUENCE [LARGE SCALE GENOMIC DNA]</scope>
    <source>
        <strain>cv. Nipponbare</strain>
    </source>
</reference>
<reference key="2">
    <citation type="journal article" date="2005" name="Nature">
        <title>The map-based sequence of the rice genome.</title>
        <authorList>
            <consortium name="International rice genome sequencing project (IRGSP)"/>
        </authorList>
    </citation>
    <scope>NUCLEOTIDE SEQUENCE [LARGE SCALE GENOMIC DNA]</scope>
    <source>
        <strain>cv. Nipponbare</strain>
    </source>
</reference>
<reference key="3">
    <citation type="journal article" date="2008" name="Nucleic Acids Res.">
        <title>The rice annotation project database (RAP-DB): 2008 update.</title>
        <authorList>
            <consortium name="The rice annotation project (RAP)"/>
        </authorList>
    </citation>
    <scope>GENOME REANNOTATION</scope>
    <source>
        <strain>cv. Nipponbare</strain>
    </source>
</reference>
<reference key="4">
    <citation type="journal article" date="2013" name="Rice">
        <title>Improvement of the Oryza sativa Nipponbare reference genome using next generation sequence and optical map data.</title>
        <authorList>
            <person name="Kawahara Y."/>
            <person name="de la Bastide M."/>
            <person name="Hamilton J.P."/>
            <person name="Kanamori H."/>
            <person name="McCombie W.R."/>
            <person name="Ouyang S."/>
            <person name="Schwartz D.C."/>
            <person name="Tanaka T."/>
            <person name="Wu J."/>
            <person name="Zhou S."/>
            <person name="Childs K.L."/>
            <person name="Davidson R.M."/>
            <person name="Lin H."/>
            <person name="Quesada-Ocampo L."/>
            <person name="Vaillancourt B."/>
            <person name="Sakai H."/>
            <person name="Lee S.S."/>
            <person name="Kim J."/>
            <person name="Numa H."/>
            <person name="Itoh T."/>
            <person name="Buell C.R."/>
            <person name="Matsumoto T."/>
        </authorList>
    </citation>
    <scope>GENOME REANNOTATION</scope>
    <source>
        <strain>cv. Nipponbare</strain>
    </source>
</reference>
<reference key="5">
    <citation type="journal article" date="2005" name="PLoS Biol.">
        <title>The genomes of Oryza sativa: a history of duplications.</title>
        <authorList>
            <person name="Yu J."/>
            <person name="Wang J."/>
            <person name="Lin W."/>
            <person name="Li S."/>
            <person name="Li H."/>
            <person name="Zhou J."/>
            <person name="Ni P."/>
            <person name="Dong W."/>
            <person name="Hu S."/>
            <person name="Zeng C."/>
            <person name="Zhang J."/>
            <person name="Zhang Y."/>
            <person name="Li R."/>
            <person name="Xu Z."/>
            <person name="Li S."/>
            <person name="Li X."/>
            <person name="Zheng H."/>
            <person name="Cong L."/>
            <person name="Lin L."/>
            <person name="Yin J."/>
            <person name="Geng J."/>
            <person name="Li G."/>
            <person name="Shi J."/>
            <person name="Liu J."/>
            <person name="Lv H."/>
            <person name="Li J."/>
            <person name="Wang J."/>
            <person name="Deng Y."/>
            <person name="Ran L."/>
            <person name="Shi X."/>
            <person name="Wang X."/>
            <person name="Wu Q."/>
            <person name="Li C."/>
            <person name="Ren X."/>
            <person name="Wang J."/>
            <person name="Wang X."/>
            <person name="Li D."/>
            <person name="Liu D."/>
            <person name="Zhang X."/>
            <person name="Ji Z."/>
            <person name="Zhao W."/>
            <person name="Sun Y."/>
            <person name="Zhang Z."/>
            <person name="Bao J."/>
            <person name="Han Y."/>
            <person name="Dong L."/>
            <person name="Ji J."/>
            <person name="Chen P."/>
            <person name="Wu S."/>
            <person name="Liu J."/>
            <person name="Xiao Y."/>
            <person name="Bu D."/>
            <person name="Tan J."/>
            <person name="Yang L."/>
            <person name="Ye C."/>
            <person name="Zhang J."/>
            <person name="Xu J."/>
            <person name="Zhou Y."/>
            <person name="Yu Y."/>
            <person name="Zhang B."/>
            <person name="Zhuang S."/>
            <person name="Wei H."/>
            <person name="Liu B."/>
            <person name="Lei M."/>
            <person name="Yu H."/>
            <person name="Li Y."/>
            <person name="Xu H."/>
            <person name="Wei S."/>
            <person name="He X."/>
            <person name="Fang L."/>
            <person name="Zhang Z."/>
            <person name="Zhang Y."/>
            <person name="Huang X."/>
            <person name="Su Z."/>
            <person name="Tong W."/>
            <person name="Li J."/>
            <person name="Tong Z."/>
            <person name="Li S."/>
            <person name="Ye J."/>
            <person name="Wang L."/>
            <person name="Fang L."/>
            <person name="Lei T."/>
            <person name="Chen C.-S."/>
            <person name="Chen H.-C."/>
            <person name="Xu Z."/>
            <person name="Li H."/>
            <person name="Huang H."/>
            <person name="Zhang F."/>
            <person name="Xu H."/>
            <person name="Li N."/>
            <person name="Zhao C."/>
            <person name="Li S."/>
            <person name="Dong L."/>
            <person name="Huang Y."/>
            <person name="Li L."/>
            <person name="Xi Y."/>
            <person name="Qi Q."/>
            <person name="Li W."/>
            <person name="Zhang B."/>
            <person name="Hu W."/>
            <person name="Zhang Y."/>
            <person name="Tian X."/>
            <person name="Jiao Y."/>
            <person name="Liang X."/>
            <person name="Jin J."/>
            <person name="Gao L."/>
            <person name="Zheng W."/>
            <person name="Hao B."/>
            <person name="Liu S.-M."/>
            <person name="Wang W."/>
            <person name="Yuan L."/>
            <person name="Cao M."/>
            <person name="McDermott J."/>
            <person name="Samudrala R."/>
            <person name="Wang J."/>
            <person name="Wong G.K.-S."/>
            <person name="Yang H."/>
        </authorList>
    </citation>
    <scope>NUCLEOTIDE SEQUENCE [LARGE SCALE GENOMIC DNA]</scope>
    <source>
        <strain>cv. Nipponbare</strain>
    </source>
</reference>
<reference key="6">
    <citation type="journal article" date="2009" name="Plant Cell">
        <title>Antagonistic HLH/bHLH transcription factors mediate brassinosteroid regulation of cell elongation and plant development in rice and Arabidopsis.</title>
        <authorList>
            <person name="Zhang L.Y."/>
            <person name="Bai M.Y."/>
            <person name="Wu J."/>
            <person name="Zhu J.Y."/>
            <person name="Wang H."/>
            <person name="Zhang Z."/>
            <person name="Wang W."/>
            <person name="Sun Y."/>
            <person name="Zhao J."/>
            <person name="Sun X."/>
            <person name="Yang H."/>
            <person name="Xu Y."/>
            <person name="Kim S.H."/>
            <person name="Fujioka S."/>
            <person name="Lin W.H."/>
            <person name="Chong K."/>
            <person name="Lu T."/>
            <person name="Wang Z.Y."/>
        </authorList>
    </citation>
    <scope>FUNCTION</scope>
    <scope>INTERACTION WITH IBH1</scope>
    <scope>TISSUE SPECIFICITY</scope>
    <scope>INDUCTION BY EPIBRASSINOLIDE</scope>
</reference>
<reference key="7">
    <citation type="journal article" date="2010" name="Plant Physiol.">
        <title>Genome-wide classification and evolutionary analysis of the bHLH family of transcription factors in Arabidopsis, poplar, rice, moss, and algae.</title>
        <authorList>
            <person name="Carretero-Paulet L."/>
            <person name="Galstyan A."/>
            <person name="Roig-Villanova I."/>
            <person name="Martinez-Garcia J.F."/>
            <person name="Bilbao-Castro J.R."/>
            <person name="Robertson D.L."/>
        </authorList>
    </citation>
    <scope>GENE FAMILY</scope>
    <scope>NOMENCLATURE</scope>
</reference>
<proteinExistence type="evidence at protein level"/>
<accession>Q7X742</accession>
<accession>A0A0P0WFD4</accession>
<name>ILI1_ORYSJ</name>
<comment type="function">
    <text evidence="3">Atypical and probable non DNA-binding bHLH transcription factor that acts as a positive regulator of cell elongation and plant development. Binds the transcription repressor IBH1 and forms a heterodimer of antagonistic bHLH transcription factors that function downstream of BZR1 to mediate brassinosteroid regulation of cell elongation and lamina inclination.</text>
</comment>
<comment type="subunit">
    <text evidence="3">Interacts with IBH1.</text>
</comment>
<comment type="tissue specificity">
    <text evidence="3">Expressed in leaf blades, leaf sheaths, lamina joint, stems and panicles. Expressed at low levels in roots.</text>
</comment>
<comment type="induction">
    <text evidence="3">By epibrassinolide.</text>
</comment>
<comment type="miscellaneous">
    <text evidence="6">Gain-of-function mutants ili1-D (T-DNA tagging) show increased lamina joint inclination and hypersensitivity to brassinosteroid.</text>
</comment>
<comment type="similarity">
    <text>Belongs to the bHLH protein family.</text>
</comment>
<feature type="chain" id="PRO_0000429088" description="Transcription factor ILI1">
    <location>
        <begin position="1"/>
        <end position="104"/>
    </location>
</feature>
<feature type="domain" description="bHLH" evidence="1">
    <location>
        <begin position="16"/>
        <end position="71"/>
    </location>
</feature>
<feature type="region of interest" description="Disordered" evidence="2">
    <location>
        <begin position="1"/>
        <end position="27"/>
    </location>
</feature>
<feature type="compositionally biased region" description="Basic residues" evidence="2">
    <location>
        <begin position="1"/>
        <end position="11"/>
    </location>
</feature>
<feature type="compositionally biased region" description="Low complexity" evidence="2">
    <location>
        <begin position="12"/>
        <end position="27"/>
    </location>
</feature>
<protein>
    <recommendedName>
        <fullName>Transcription factor ILI1</fullName>
        <shortName>OsILI1</shortName>
    </recommendedName>
    <alternativeName>
        <fullName>Basic helix-loop-helix protein 154</fullName>
        <shortName>OsbHLH154</shortName>
    </alternativeName>
    <alternativeName>
        <fullName>Protein INCREASED LEAF INCLINATION 1</fullName>
    </alternativeName>
    <alternativeName>
        <fullName>bHLH transcription factor bHLH154</fullName>
    </alternativeName>
</protein>